<protein>
    <recommendedName>
        <fullName evidence="1">Large ribosomal subunit protein uL30</fullName>
    </recommendedName>
    <alternativeName>
        <fullName evidence="3">50S ribosomal protein L30</fullName>
    </alternativeName>
</protein>
<comment type="subunit">
    <text evidence="1">Part of the 50S ribosomal subunit.</text>
</comment>
<comment type="similarity">
    <text evidence="1">Belongs to the universal ribosomal protein uL30 family.</text>
</comment>
<accession>Q9HPB3</accession>
<reference key="1">
    <citation type="journal article" date="2000" name="Proc. Natl. Acad. Sci. U.S.A.">
        <title>Genome sequence of Halobacterium species NRC-1.</title>
        <authorList>
            <person name="Ng W.V."/>
            <person name="Kennedy S.P."/>
            <person name="Mahairas G.G."/>
            <person name="Berquist B."/>
            <person name="Pan M."/>
            <person name="Shukla H.D."/>
            <person name="Lasky S.R."/>
            <person name="Baliga N.S."/>
            <person name="Thorsson V."/>
            <person name="Sbrogna J."/>
            <person name="Swartzell S."/>
            <person name="Weir D."/>
            <person name="Hall J."/>
            <person name="Dahl T.A."/>
            <person name="Welti R."/>
            <person name="Goo Y.A."/>
            <person name="Leithauser B."/>
            <person name="Keller K."/>
            <person name="Cruz R."/>
            <person name="Danson M.J."/>
            <person name="Hough D.W."/>
            <person name="Maddocks D.G."/>
            <person name="Jablonski P.E."/>
            <person name="Krebs M.P."/>
            <person name="Angevine C.M."/>
            <person name="Dale H."/>
            <person name="Isenbarger T.A."/>
            <person name="Peck R.F."/>
            <person name="Pohlschroder M."/>
            <person name="Spudich J.L."/>
            <person name="Jung K.-H."/>
            <person name="Alam M."/>
            <person name="Freitas T."/>
            <person name="Hou S."/>
            <person name="Daniels C.J."/>
            <person name="Dennis P.P."/>
            <person name="Omer A.D."/>
            <person name="Ebhardt H."/>
            <person name="Lowe T.M."/>
            <person name="Liang P."/>
            <person name="Riley M."/>
            <person name="Hood L."/>
            <person name="DasSarma S."/>
        </authorList>
    </citation>
    <scope>NUCLEOTIDE SEQUENCE [LARGE SCALE GENOMIC DNA]</scope>
    <source>
        <strain>ATCC 700922 / JCM 11081 / NRC-1</strain>
    </source>
</reference>
<evidence type="ECO:0000255" key="1">
    <source>
        <dbReference type="HAMAP-Rule" id="MF_01371"/>
    </source>
</evidence>
<evidence type="ECO:0000256" key="2">
    <source>
        <dbReference type="SAM" id="MobiDB-lite"/>
    </source>
</evidence>
<evidence type="ECO:0000305" key="3"/>
<dbReference type="EMBL" id="AE004437">
    <property type="protein sequence ID" value="AAG19957.1"/>
    <property type="molecule type" value="Genomic_DNA"/>
</dbReference>
<dbReference type="PIR" id="A84324">
    <property type="entry name" value="A84324"/>
</dbReference>
<dbReference type="SMR" id="Q9HPB3"/>
<dbReference type="FunCoup" id="Q9HPB3">
    <property type="interactions" value="130"/>
</dbReference>
<dbReference type="STRING" id="64091.VNG_1716G"/>
<dbReference type="PaxDb" id="64091-VNG_1716G"/>
<dbReference type="KEGG" id="hal:VNG_1716G"/>
<dbReference type="PATRIC" id="fig|64091.14.peg.1309"/>
<dbReference type="HOGENOM" id="CLU_055156_6_0_2"/>
<dbReference type="InParanoid" id="Q9HPB3"/>
<dbReference type="OrthoDB" id="6379at2157"/>
<dbReference type="PhylomeDB" id="Q9HPB3"/>
<dbReference type="Proteomes" id="UP000000554">
    <property type="component" value="Chromosome"/>
</dbReference>
<dbReference type="GO" id="GO:0022625">
    <property type="term" value="C:cytosolic large ribosomal subunit"/>
    <property type="evidence" value="ECO:0000318"/>
    <property type="project" value="GO_Central"/>
</dbReference>
<dbReference type="GO" id="GO:0003723">
    <property type="term" value="F:RNA binding"/>
    <property type="evidence" value="ECO:0000318"/>
    <property type="project" value="GO_Central"/>
</dbReference>
<dbReference type="GO" id="GO:0003735">
    <property type="term" value="F:structural constituent of ribosome"/>
    <property type="evidence" value="ECO:0000318"/>
    <property type="project" value="GO_Central"/>
</dbReference>
<dbReference type="GO" id="GO:0000463">
    <property type="term" value="P:maturation of LSU-rRNA from tricistronic rRNA transcript (SSU-rRNA, 5.8S rRNA, LSU-rRNA)"/>
    <property type="evidence" value="ECO:0000318"/>
    <property type="project" value="GO_Central"/>
</dbReference>
<dbReference type="GO" id="GO:0006412">
    <property type="term" value="P:translation"/>
    <property type="evidence" value="ECO:0007669"/>
    <property type="project" value="UniProtKB-UniRule"/>
</dbReference>
<dbReference type="CDD" id="cd01657">
    <property type="entry name" value="Ribosomal_L7_archeal_euk"/>
    <property type="match status" value="1"/>
</dbReference>
<dbReference type="Gene3D" id="1.10.15.30">
    <property type="match status" value="1"/>
</dbReference>
<dbReference type="Gene3D" id="3.30.1390.20">
    <property type="entry name" value="Ribosomal protein L30, ferredoxin-like fold domain"/>
    <property type="match status" value="1"/>
</dbReference>
<dbReference type="HAMAP" id="MF_01371_A">
    <property type="entry name" value="Ribosomal_uL30_A"/>
    <property type="match status" value="1"/>
</dbReference>
<dbReference type="InterPro" id="IPR036919">
    <property type="entry name" value="Ribo_uL30_ferredoxin-like_sf"/>
</dbReference>
<dbReference type="InterPro" id="IPR039699">
    <property type="entry name" value="Ribosomal_uL30"/>
</dbReference>
<dbReference type="InterPro" id="IPR005997">
    <property type="entry name" value="Ribosomal_uL30_arc"/>
</dbReference>
<dbReference type="InterPro" id="IPR035808">
    <property type="entry name" value="Ribosomal_uL30_euk_arc"/>
</dbReference>
<dbReference type="InterPro" id="IPR016082">
    <property type="entry name" value="Ribosomal_uL30_ferredoxin-like"/>
</dbReference>
<dbReference type="NCBIfam" id="NF004711">
    <property type="entry name" value="PRK06049.1"/>
    <property type="match status" value="1"/>
</dbReference>
<dbReference type="NCBIfam" id="TIGR01309">
    <property type="entry name" value="uL30_arch"/>
    <property type="match status" value="1"/>
</dbReference>
<dbReference type="PANTHER" id="PTHR11524">
    <property type="entry name" value="60S RIBOSOMAL PROTEIN L7"/>
    <property type="match status" value="1"/>
</dbReference>
<dbReference type="PANTHER" id="PTHR11524:SF16">
    <property type="entry name" value="LARGE RIBOSOMAL SUBUNIT PROTEIN UL30"/>
    <property type="match status" value="1"/>
</dbReference>
<dbReference type="Pfam" id="PF00327">
    <property type="entry name" value="Ribosomal_L30"/>
    <property type="match status" value="1"/>
</dbReference>
<dbReference type="SUPFAM" id="SSF55129">
    <property type="entry name" value="Ribosomal protein L30p/L7e"/>
    <property type="match status" value="1"/>
</dbReference>
<gene>
    <name evidence="1" type="primary">rpl30</name>
    <name type="ordered locus">VNG_1716G</name>
</gene>
<proteinExistence type="inferred from homology"/>
<organism>
    <name type="scientific">Halobacterium salinarum (strain ATCC 700922 / JCM 11081 / NRC-1)</name>
    <name type="common">Halobacterium halobium</name>
    <dbReference type="NCBI Taxonomy" id="64091"/>
    <lineage>
        <taxon>Archaea</taxon>
        <taxon>Methanobacteriati</taxon>
        <taxon>Methanobacteriota</taxon>
        <taxon>Stenosarchaea group</taxon>
        <taxon>Halobacteria</taxon>
        <taxon>Halobacteriales</taxon>
        <taxon>Halobacteriaceae</taxon>
        <taxon>Halobacterium</taxon>
        <taxon>Halobacterium salinarum NRC-34001</taxon>
    </lineage>
</organism>
<feature type="chain" id="PRO_0000104623" description="Large ribosomal subunit protein uL30">
    <location>
        <begin position="1"/>
        <end position="154"/>
    </location>
</feature>
<feature type="region of interest" description="Disordered" evidence="2">
    <location>
        <begin position="122"/>
        <end position="141"/>
    </location>
</feature>
<keyword id="KW-1185">Reference proteome</keyword>
<keyword id="KW-0687">Ribonucleoprotein</keyword>
<keyword id="KW-0689">Ribosomal protein</keyword>
<sequence length="154" mass="16429">MQALVQVRGPVDMSRDIQDTLEMLNIHSVNHCALVPETDTYSGMVAKVNDYVAFGEPSEAVLTDLIESRGEPASGAGDVDDAWVAEHTEYDDVADLAGALLAEETTLSDAGLAPVIRLHPPRGGHDGIKTPASDGGQLGKHTTEEIDHLLTDMR</sequence>
<name>RL30_HALSA</name>